<sequence>MLPYPQIDPVALAIGPLKIHWYGLMYLIGIGGAWLLASRRLNRFDPTWNREKLSDLVFWLSMGVIVGGRLGYVLFYDLHAYLANPTLIFEVWKGGMSFHGGFIGVMLAALWFGKRNNKSFFELMDFVAPLVPIGLGAGRIGNFINAELWGKPTDVPWAMIFPPFSDPAQLPRHPSQLYQFALEGVALFVILWLFSRKPRPTMAVSGMFSLCYGIFRFAVEFVRVPDAQLGYIAFGWLTQGQLLCIPMIVGGLVLIWWAYNRKPTAKPA</sequence>
<gene>
    <name evidence="1" type="primary">lgt</name>
    <name type="ordered locus">PP_5142</name>
</gene>
<accession>Q88CN8</accession>
<name>LGT_PSEPK</name>
<dbReference type="EC" id="2.5.1.145" evidence="1"/>
<dbReference type="EMBL" id="AE015451">
    <property type="protein sequence ID" value="AAN70707.1"/>
    <property type="molecule type" value="Genomic_DNA"/>
</dbReference>
<dbReference type="RefSeq" id="NP_747243.1">
    <property type="nucleotide sequence ID" value="NC_002947.4"/>
</dbReference>
<dbReference type="RefSeq" id="WP_010955678.1">
    <property type="nucleotide sequence ID" value="NZ_CP169744.1"/>
</dbReference>
<dbReference type="SMR" id="Q88CN8"/>
<dbReference type="STRING" id="160488.PP_5142"/>
<dbReference type="PaxDb" id="160488-PP_5142"/>
<dbReference type="GeneID" id="83682879"/>
<dbReference type="KEGG" id="ppu:PP_5142"/>
<dbReference type="PATRIC" id="fig|160488.4.peg.5489"/>
<dbReference type="eggNOG" id="COG0682">
    <property type="taxonomic scope" value="Bacteria"/>
</dbReference>
<dbReference type="HOGENOM" id="CLU_013386_1_0_6"/>
<dbReference type="OrthoDB" id="871140at2"/>
<dbReference type="PhylomeDB" id="Q88CN8"/>
<dbReference type="BioCyc" id="PPUT160488:G1G01-5487-MONOMER"/>
<dbReference type="UniPathway" id="UPA00664"/>
<dbReference type="Proteomes" id="UP000000556">
    <property type="component" value="Chromosome"/>
</dbReference>
<dbReference type="GO" id="GO:0005886">
    <property type="term" value="C:plasma membrane"/>
    <property type="evidence" value="ECO:0007669"/>
    <property type="project" value="UniProtKB-SubCell"/>
</dbReference>
<dbReference type="GO" id="GO:0008961">
    <property type="term" value="F:phosphatidylglycerol-prolipoprotein diacylglyceryl transferase activity"/>
    <property type="evidence" value="ECO:0007669"/>
    <property type="project" value="UniProtKB-UniRule"/>
</dbReference>
<dbReference type="GO" id="GO:0042158">
    <property type="term" value="P:lipoprotein biosynthetic process"/>
    <property type="evidence" value="ECO:0007669"/>
    <property type="project" value="UniProtKB-UniRule"/>
</dbReference>
<dbReference type="HAMAP" id="MF_01147">
    <property type="entry name" value="Lgt"/>
    <property type="match status" value="1"/>
</dbReference>
<dbReference type="InterPro" id="IPR001640">
    <property type="entry name" value="Lgt"/>
</dbReference>
<dbReference type="NCBIfam" id="TIGR00544">
    <property type="entry name" value="lgt"/>
    <property type="match status" value="1"/>
</dbReference>
<dbReference type="PANTHER" id="PTHR30589:SF0">
    <property type="entry name" value="PHOSPHATIDYLGLYCEROL--PROLIPOPROTEIN DIACYLGLYCERYL TRANSFERASE"/>
    <property type="match status" value="1"/>
</dbReference>
<dbReference type="PANTHER" id="PTHR30589">
    <property type="entry name" value="PROLIPOPROTEIN DIACYLGLYCERYL TRANSFERASE"/>
    <property type="match status" value="1"/>
</dbReference>
<dbReference type="Pfam" id="PF01790">
    <property type="entry name" value="LGT"/>
    <property type="match status" value="1"/>
</dbReference>
<dbReference type="PROSITE" id="PS01311">
    <property type="entry name" value="LGT"/>
    <property type="match status" value="1"/>
</dbReference>
<reference key="1">
    <citation type="journal article" date="2002" name="Environ. Microbiol.">
        <title>Complete genome sequence and comparative analysis of the metabolically versatile Pseudomonas putida KT2440.</title>
        <authorList>
            <person name="Nelson K.E."/>
            <person name="Weinel C."/>
            <person name="Paulsen I.T."/>
            <person name="Dodson R.J."/>
            <person name="Hilbert H."/>
            <person name="Martins dos Santos V.A.P."/>
            <person name="Fouts D.E."/>
            <person name="Gill S.R."/>
            <person name="Pop M."/>
            <person name="Holmes M."/>
            <person name="Brinkac L.M."/>
            <person name="Beanan M.J."/>
            <person name="DeBoy R.T."/>
            <person name="Daugherty S.C."/>
            <person name="Kolonay J.F."/>
            <person name="Madupu R."/>
            <person name="Nelson W.C."/>
            <person name="White O."/>
            <person name="Peterson J.D."/>
            <person name="Khouri H.M."/>
            <person name="Hance I."/>
            <person name="Chris Lee P."/>
            <person name="Holtzapple E.K."/>
            <person name="Scanlan D."/>
            <person name="Tran K."/>
            <person name="Moazzez A."/>
            <person name="Utterback T.R."/>
            <person name="Rizzo M."/>
            <person name="Lee K."/>
            <person name="Kosack D."/>
            <person name="Moestl D."/>
            <person name="Wedler H."/>
            <person name="Lauber J."/>
            <person name="Stjepandic D."/>
            <person name="Hoheisel J."/>
            <person name="Straetz M."/>
            <person name="Heim S."/>
            <person name="Kiewitz C."/>
            <person name="Eisen J.A."/>
            <person name="Timmis K.N."/>
            <person name="Duesterhoeft A."/>
            <person name="Tuemmler B."/>
            <person name="Fraser C.M."/>
        </authorList>
    </citation>
    <scope>NUCLEOTIDE SEQUENCE [LARGE SCALE GENOMIC DNA]</scope>
    <source>
        <strain>ATCC 47054 / DSM 6125 / CFBP 8728 / NCIMB 11950 / KT2440</strain>
    </source>
</reference>
<organism>
    <name type="scientific">Pseudomonas putida (strain ATCC 47054 / DSM 6125 / CFBP 8728 / NCIMB 11950 / KT2440)</name>
    <dbReference type="NCBI Taxonomy" id="160488"/>
    <lineage>
        <taxon>Bacteria</taxon>
        <taxon>Pseudomonadati</taxon>
        <taxon>Pseudomonadota</taxon>
        <taxon>Gammaproteobacteria</taxon>
        <taxon>Pseudomonadales</taxon>
        <taxon>Pseudomonadaceae</taxon>
        <taxon>Pseudomonas</taxon>
    </lineage>
</organism>
<evidence type="ECO:0000255" key="1">
    <source>
        <dbReference type="HAMAP-Rule" id="MF_01147"/>
    </source>
</evidence>
<proteinExistence type="inferred from homology"/>
<comment type="function">
    <text evidence="1">Catalyzes the transfer of the diacylglyceryl group from phosphatidylglycerol to the sulfhydryl group of the N-terminal cysteine of a prolipoprotein, the first step in the formation of mature lipoproteins.</text>
</comment>
<comment type="catalytic activity">
    <reaction evidence="1">
        <text>L-cysteinyl-[prolipoprotein] + a 1,2-diacyl-sn-glycero-3-phospho-(1'-sn-glycerol) = an S-1,2-diacyl-sn-glyceryl-L-cysteinyl-[prolipoprotein] + sn-glycerol 1-phosphate + H(+)</text>
        <dbReference type="Rhea" id="RHEA:56712"/>
        <dbReference type="Rhea" id="RHEA-COMP:14679"/>
        <dbReference type="Rhea" id="RHEA-COMP:14680"/>
        <dbReference type="ChEBI" id="CHEBI:15378"/>
        <dbReference type="ChEBI" id="CHEBI:29950"/>
        <dbReference type="ChEBI" id="CHEBI:57685"/>
        <dbReference type="ChEBI" id="CHEBI:64716"/>
        <dbReference type="ChEBI" id="CHEBI:140658"/>
        <dbReference type="EC" id="2.5.1.145"/>
    </reaction>
</comment>
<comment type="pathway">
    <text evidence="1">Protein modification; lipoprotein biosynthesis (diacylglyceryl transfer).</text>
</comment>
<comment type="subcellular location">
    <subcellularLocation>
        <location evidence="1">Cell inner membrane</location>
        <topology evidence="1">Multi-pass membrane protein</topology>
    </subcellularLocation>
</comment>
<comment type="similarity">
    <text evidence="1">Belongs to the Lgt family.</text>
</comment>
<feature type="chain" id="PRO_0000172655" description="Phosphatidylglycerol--prolipoprotein diacylglyceryl transferase">
    <location>
        <begin position="1"/>
        <end position="268"/>
    </location>
</feature>
<feature type="transmembrane region" description="Helical" evidence="1">
    <location>
        <begin position="10"/>
        <end position="30"/>
    </location>
</feature>
<feature type="transmembrane region" description="Helical" evidence="1">
    <location>
        <begin position="56"/>
        <end position="76"/>
    </location>
</feature>
<feature type="transmembrane region" description="Helical" evidence="1">
    <location>
        <begin position="92"/>
        <end position="112"/>
    </location>
</feature>
<feature type="transmembrane region" description="Helical" evidence="1">
    <location>
        <begin position="120"/>
        <end position="140"/>
    </location>
</feature>
<feature type="transmembrane region" description="Helical" evidence="1">
    <location>
        <begin position="174"/>
        <end position="194"/>
    </location>
</feature>
<feature type="transmembrane region" description="Helical" evidence="1">
    <location>
        <begin position="202"/>
        <end position="222"/>
    </location>
</feature>
<feature type="transmembrane region" description="Helical" evidence="1">
    <location>
        <begin position="236"/>
        <end position="256"/>
    </location>
</feature>
<feature type="binding site" evidence="1">
    <location>
        <position position="139"/>
    </location>
    <ligand>
        <name>a 1,2-diacyl-sn-glycero-3-phospho-(1'-sn-glycerol)</name>
        <dbReference type="ChEBI" id="CHEBI:64716"/>
    </ligand>
</feature>
<protein>
    <recommendedName>
        <fullName evidence="1">Phosphatidylglycerol--prolipoprotein diacylglyceryl transferase</fullName>
        <ecNumber evidence="1">2.5.1.145</ecNumber>
    </recommendedName>
</protein>
<keyword id="KW-0997">Cell inner membrane</keyword>
<keyword id="KW-1003">Cell membrane</keyword>
<keyword id="KW-0472">Membrane</keyword>
<keyword id="KW-1185">Reference proteome</keyword>
<keyword id="KW-0808">Transferase</keyword>
<keyword id="KW-0812">Transmembrane</keyword>
<keyword id="KW-1133">Transmembrane helix</keyword>